<feature type="signal peptide" evidence="1">
    <location>
        <begin position="1"/>
        <end position="19"/>
    </location>
</feature>
<feature type="chain" id="PRO_0000416691" description="Colipase-like protein 2">
    <location>
        <begin position="20"/>
        <end position="104"/>
    </location>
</feature>
<feature type="disulfide bond" evidence="2">
    <location>
        <begin position="38"/>
        <end position="49"/>
    </location>
</feature>
<feature type="disulfide bond" evidence="2">
    <location>
        <begin position="44"/>
        <end position="60"/>
    </location>
</feature>
<feature type="disulfide bond" evidence="2">
    <location>
        <begin position="48"/>
        <end position="82"/>
    </location>
</feature>
<feature type="disulfide bond" evidence="2">
    <location>
        <begin position="70"/>
        <end position="90"/>
    </location>
</feature>
<feature type="disulfide bond" evidence="2">
    <location>
        <begin position="84"/>
        <end position="101"/>
    </location>
</feature>
<gene>
    <name type="primary">Clpsl2</name>
</gene>
<proteinExistence type="inferred from homology"/>
<comment type="subcellular location">
    <subcellularLocation>
        <location evidence="3">Secreted</location>
    </subcellularLocation>
</comment>
<comment type="similarity">
    <text evidence="2">Belongs to the colipase family.</text>
</comment>
<keyword id="KW-1015">Disulfide bond</keyword>
<keyword id="KW-1185">Reference proteome</keyword>
<keyword id="KW-0964">Secreted</keyword>
<keyword id="KW-0732">Signal</keyword>
<protein>
    <recommendedName>
        <fullName>Colipase-like protein 2</fullName>
    </recommendedName>
</protein>
<accession>D3ZVN1</accession>
<organism>
    <name type="scientific">Rattus norvegicus</name>
    <name type="common">Rat</name>
    <dbReference type="NCBI Taxonomy" id="10116"/>
    <lineage>
        <taxon>Eukaryota</taxon>
        <taxon>Metazoa</taxon>
        <taxon>Chordata</taxon>
        <taxon>Craniata</taxon>
        <taxon>Vertebrata</taxon>
        <taxon>Euteleostomi</taxon>
        <taxon>Mammalia</taxon>
        <taxon>Eutheria</taxon>
        <taxon>Euarchontoglires</taxon>
        <taxon>Glires</taxon>
        <taxon>Rodentia</taxon>
        <taxon>Myomorpha</taxon>
        <taxon>Muroidea</taxon>
        <taxon>Muridae</taxon>
        <taxon>Murinae</taxon>
        <taxon>Rattus</taxon>
    </lineage>
</organism>
<name>COLL2_RAT</name>
<dbReference type="EMBL" id="AABR03116945">
    <property type="status" value="NOT_ANNOTATED_CDS"/>
    <property type="molecule type" value="Genomic_DNA"/>
</dbReference>
<dbReference type="RefSeq" id="NP_001128474.1">
    <property type="nucleotide sequence ID" value="NM_001135002.1"/>
</dbReference>
<dbReference type="SMR" id="D3ZVN1"/>
<dbReference type="FunCoup" id="D3ZVN1">
    <property type="interactions" value="1"/>
</dbReference>
<dbReference type="STRING" id="10116.ENSRNOP00000056057"/>
<dbReference type="PhosphoSitePlus" id="D3ZVN1"/>
<dbReference type="PaxDb" id="10116-ENSRNOP00000056057"/>
<dbReference type="Ensembl" id="ENSRNOT00000059292.3">
    <property type="protein sequence ID" value="ENSRNOP00000056057.2"/>
    <property type="gene ID" value="ENSRNOG00000038807.4"/>
</dbReference>
<dbReference type="GeneID" id="689425"/>
<dbReference type="KEGG" id="rno:689425"/>
<dbReference type="UCSC" id="RGD:1592336">
    <property type="organism name" value="rat"/>
</dbReference>
<dbReference type="AGR" id="RGD:1592336"/>
<dbReference type="CTD" id="389383"/>
<dbReference type="RGD" id="1592336">
    <property type="gene designation" value="Clpsl2"/>
</dbReference>
<dbReference type="eggNOG" id="ENOG502TFBF">
    <property type="taxonomic scope" value="Eukaryota"/>
</dbReference>
<dbReference type="GeneTree" id="ENSGT00390000011494"/>
<dbReference type="HOGENOM" id="CLU_183899_0_0_1"/>
<dbReference type="InParanoid" id="D3ZVN1"/>
<dbReference type="OMA" id="SDCCLMD"/>
<dbReference type="OrthoDB" id="9834137at2759"/>
<dbReference type="PhylomeDB" id="D3ZVN1"/>
<dbReference type="TreeFam" id="TF343049"/>
<dbReference type="PRO" id="PR:D3ZVN1"/>
<dbReference type="Proteomes" id="UP000002494">
    <property type="component" value="Chromosome 20"/>
</dbReference>
<dbReference type="Bgee" id="ENSRNOG00000038807">
    <property type="expression patterns" value="Expressed in pancreas and 7 other cell types or tissues"/>
</dbReference>
<dbReference type="ExpressionAtlas" id="D3ZVN1">
    <property type="expression patterns" value="baseline"/>
</dbReference>
<dbReference type="GO" id="GO:0005576">
    <property type="term" value="C:extracellular region"/>
    <property type="evidence" value="ECO:0007669"/>
    <property type="project" value="UniProtKB-SubCell"/>
</dbReference>
<dbReference type="GO" id="GO:0008047">
    <property type="term" value="F:enzyme activator activity"/>
    <property type="evidence" value="ECO:0007669"/>
    <property type="project" value="InterPro"/>
</dbReference>
<dbReference type="GO" id="GO:0007586">
    <property type="term" value="P:digestion"/>
    <property type="evidence" value="ECO:0007669"/>
    <property type="project" value="InterPro"/>
</dbReference>
<dbReference type="GO" id="GO:0016042">
    <property type="term" value="P:lipid catabolic process"/>
    <property type="evidence" value="ECO:0007669"/>
    <property type="project" value="InterPro"/>
</dbReference>
<dbReference type="GO" id="GO:0032094">
    <property type="term" value="P:response to food"/>
    <property type="evidence" value="ECO:0000318"/>
    <property type="project" value="GO_Central"/>
</dbReference>
<dbReference type="FunFam" id="2.10.80.10:FF:000006">
    <property type="entry name" value="Colipase-like protein 2"/>
    <property type="match status" value="1"/>
</dbReference>
<dbReference type="Gene3D" id="2.10.80.10">
    <property type="entry name" value="Lipase, subunit A"/>
    <property type="match status" value="1"/>
</dbReference>
<dbReference type="InterPro" id="IPR001981">
    <property type="entry name" value="Colipase"/>
</dbReference>
<dbReference type="PANTHER" id="PTHR10041">
    <property type="entry name" value="COLIPASE"/>
    <property type="match status" value="1"/>
</dbReference>
<dbReference type="PANTHER" id="PTHR10041:SF3">
    <property type="entry name" value="COLIPASE-LIKE PROTEIN 2"/>
    <property type="match status" value="1"/>
</dbReference>
<dbReference type="PROSITE" id="PS51342">
    <property type="entry name" value="COLIPASE_2"/>
    <property type="match status" value="1"/>
</dbReference>
<reference key="1">
    <citation type="journal article" date="2004" name="Nature">
        <title>Genome sequence of the Brown Norway rat yields insights into mammalian evolution.</title>
        <authorList>
            <person name="Gibbs R.A."/>
            <person name="Weinstock G.M."/>
            <person name="Metzker M.L."/>
            <person name="Muzny D.M."/>
            <person name="Sodergren E.J."/>
            <person name="Scherer S."/>
            <person name="Scott G."/>
            <person name="Steffen D."/>
            <person name="Worley K.C."/>
            <person name="Burch P.E."/>
            <person name="Okwuonu G."/>
            <person name="Hines S."/>
            <person name="Lewis L."/>
            <person name="Deramo C."/>
            <person name="Delgado O."/>
            <person name="Dugan-Rocha S."/>
            <person name="Miner G."/>
            <person name="Morgan M."/>
            <person name="Hawes A."/>
            <person name="Gill R."/>
            <person name="Holt R.A."/>
            <person name="Adams M.D."/>
            <person name="Amanatides P.G."/>
            <person name="Baden-Tillson H."/>
            <person name="Barnstead M."/>
            <person name="Chin S."/>
            <person name="Evans C.A."/>
            <person name="Ferriera S."/>
            <person name="Fosler C."/>
            <person name="Glodek A."/>
            <person name="Gu Z."/>
            <person name="Jennings D."/>
            <person name="Kraft C.L."/>
            <person name="Nguyen T."/>
            <person name="Pfannkoch C.M."/>
            <person name="Sitter C."/>
            <person name="Sutton G.G."/>
            <person name="Venter J.C."/>
            <person name="Woodage T."/>
            <person name="Smith D."/>
            <person name="Lee H.-M."/>
            <person name="Gustafson E."/>
            <person name="Cahill P."/>
            <person name="Kana A."/>
            <person name="Doucette-Stamm L."/>
            <person name="Weinstock K."/>
            <person name="Fechtel K."/>
            <person name="Weiss R.B."/>
            <person name="Dunn D.M."/>
            <person name="Green E.D."/>
            <person name="Blakesley R.W."/>
            <person name="Bouffard G.G."/>
            <person name="De Jong P.J."/>
            <person name="Osoegawa K."/>
            <person name="Zhu B."/>
            <person name="Marra M."/>
            <person name="Schein J."/>
            <person name="Bosdet I."/>
            <person name="Fjell C."/>
            <person name="Jones S."/>
            <person name="Krzywinski M."/>
            <person name="Mathewson C."/>
            <person name="Siddiqui A."/>
            <person name="Wye N."/>
            <person name="McPherson J."/>
            <person name="Zhao S."/>
            <person name="Fraser C.M."/>
            <person name="Shetty J."/>
            <person name="Shatsman S."/>
            <person name="Geer K."/>
            <person name="Chen Y."/>
            <person name="Abramzon S."/>
            <person name="Nierman W.C."/>
            <person name="Havlak P.H."/>
            <person name="Chen R."/>
            <person name="Durbin K.J."/>
            <person name="Egan A."/>
            <person name="Ren Y."/>
            <person name="Song X.-Z."/>
            <person name="Li B."/>
            <person name="Liu Y."/>
            <person name="Qin X."/>
            <person name="Cawley S."/>
            <person name="Cooney A.J."/>
            <person name="D'Souza L.M."/>
            <person name="Martin K."/>
            <person name="Wu J.Q."/>
            <person name="Gonzalez-Garay M.L."/>
            <person name="Jackson A.R."/>
            <person name="Kalafus K.J."/>
            <person name="McLeod M.P."/>
            <person name="Milosavljevic A."/>
            <person name="Virk D."/>
            <person name="Volkov A."/>
            <person name="Wheeler D.A."/>
            <person name="Zhang Z."/>
            <person name="Bailey J.A."/>
            <person name="Eichler E.E."/>
            <person name="Tuzun E."/>
            <person name="Birney E."/>
            <person name="Mongin E."/>
            <person name="Ureta-Vidal A."/>
            <person name="Woodwark C."/>
            <person name="Zdobnov E."/>
            <person name="Bork P."/>
            <person name="Suyama M."/>
            <person name="Torrents D."/>
            <person name="Alexandersson M."/>
            <person name="Trask B.J."/>
            <person name="Young J.M."/>
            <person name="Huang H."/>
            <person name="Wang H."/>
            <person name="Xing H."/>
            <person name="Daniels S."/>
            <person name="Gietzen D."/>
            <person name="Schmidt J."/>
            <person name="Stevens K."/>
            <person name="Vitt U."/>
            <person name="Wingrove J."/>
            <person name="Camara F."/>
            <person name="Mar Alba M."/>
            <person name="Abril J.F."/>
            <person name="Guigo R."/>
            <person name="Smit A."/>
            <person name="Dubchak I."/>
            <person name="Rubin E.M."/>
            <person name="Couronne O."/>
            <person name="Poliakov A."/>
            <person name="Huebner N."/>
            <person name="Ganten D."/>
            <person name="Goesele C."/>
            <person name="Hummel O."/>
            <person name="Kreitler T."/>
            <person name="Lee Y.-A."/>
            <person name="Monti J."/>
            <person name="Schulz H."/>
            <person name="Zimdahl H."/>
            <person name="Himmelbauer H."/>
            <person name="Lehrach H."/>
            <person name="Jacob H.J."/>
            <person name="Bromberg S."/>
            <person name="Gullings-Handley J."/>
            <person name="Jensen-Seaman M.I."/>
            <person name="Kwitek A.E."/>
            <person name="Lazar J."/>
            <person name="Pasko D."/>
            <person name="Tonellato P.J."/>
            <person name="Twigger S."/>
            <person name="Ponting C.P."/>
            <person name="Duarte J.M."/>
            <person name="Rice S."/>
            <person name="Goodstadt L."/>
            <person name="Beatson S.A."/>
            <person name="Emes R.D."/>
            <person name="Winter E.E."/>
            <person name="Webber C."/>
            <person name="Brandt P."/>
            <person name="Nyakatura G."/>
            <person name="Adetobi M."/>
            <person name="Chiaromonte F."/>
            <person name="Elnitski L."/>
            <person name="Eswara P."/>
            <person name="Hardison R.C."/>
            <person name="Hou M."/>
            <person name="Kolbe D."/>
            <person name="Makova K."/>
            <person name="Miller W."/>
            <person name="Nekrutenko A."/>
            <person name="Riemer C."/>
            <person name="Schwartz S."/>
            <person name="Taylor J."/>
            <person name="Yang S."/>
            <person name="Zhang Y."/>
            <person name="Lindpaintner K."/>
            <person name="Andrews T.D."/>
            <person name="Caccamo M."/>
            <person name="Clamp M."/>
            <person name="Clarke L."/>
            <person name="Curwen V."/>
            <person name="Durbin R.M."/>
            <person name="Eyras E."/>
            <person name="Searle S.M."/>
            <person name="Cooper G.M."/>
            <person name="Batzoglou S."/>
            <person name="Brudno M."/>
            <person name="Sidow A."/>
            <person name="Stone E.A."/>
            <person name="Payseur B.A."/>
            <person name="Bourque G."/>
            <person name="Lopez-Otin C."/>
            <person name="Puente X.S."/>
            <person name="Chakrabarti K."/>
            <person name="Chatterji S."/>
            <person name="Dewey C."/>
            <person name="Pachter L."/>
            <person name="Bray N."/>
            <person name="Yap V.B."/>
            <person name="Caspi A."/>
            <person name="Tesler G."/>
            <person name="Pevzner P.A."/>
            <person name="Haussler D."/>
            <person name="Roskin K.M."/>
            <person name="Baertsch R."/>
            <person name="Clawson H."/>
            <person name="Furey T.S."/>
            <person name="Hinrichs A.S."/>
            <person name="Karolchik D."/>
            <person name="Kent W.J."/>
            <person name="Rosenbloom K.R."/>
            <person name="Trumbower H."/>
            <person name="Weirauch M."/>
            <person name="Cooper D.N."/>
            <person name="Stenson P.D."/>
            <person name="Ma B."/>
            <person name="Brent M."/>
            <person name="Arumugam M."/>
            <person name="Shteynberg D."/>
            <person name="Copley R.R."/>
            <person name="Taylor M.S."/>
            <person name="Riethman H."/>
            <person name="Mudunuri U."/>
            <person name="Peterson J."/>
            <person name="Guyer M."/>
            <person name="Felsenfeld A."/>
            <person name="Old S."/>
            <person name="Mockrin S."/>
            <person name="Collins F.S."/>
        </authorList>
    </citation>
    <scope>NUCLEOTIDE SEQUENCE [LARGE SCALE GENOMIC DNA]</scope>
</reference>
<evidence type="ECO:0000250" key="1"/>
<evidence type="ECO:0000255" key="2">
    <source>
        <dbReference type="PROSITE-ProRule" id="PRU00674"/>
    </source>
</evidence>
<evidence type="ECO:0000305" key="3"/>
<sequence length="104" mass="11495">MAFTQALVTVLAFLVGTLPHKFDFSENSDLKKANGDKCVHHSQCFSDCCLIDLERSGAFCTSKSHVGMACLPQTKRSLNILCPCRIGLSCHSKDPMCPRRCQMI</sequence>